<protein>
    <recommendedName>
        <fullName evidence="1">Ribosomal RNA small subunit methyltransferase G</fullName>
        <ecNumber evidence="1">2.1.1.-</ecNumber>
    </recommendedName>
    <alternativeName>
        <fullName evidence="1">16S rRNA 7-methylguanosine methyltransferase</fullName>
        <shortName evidence="1">16S rRNA m7G methyltransferase</shortName>
    </alternativeName>
</protein>
<evidence type="ECO:0000255" key="1">
    <source>
        <dbReference type="HAMAP-Rule" id="MF_00074"/>
    </source>
</evidence>
<gene>
    <name evidence="1" type="primary">rsmG</name>
    <name type="ordered locus">TM_0707</name>
</gene>
<dbReference type="EC" id="2.1.1.-" evidence="1"/>
<dbReference type="EMBL" id="AE000512">
    <property type="protein sequence ID" value="AAD35789.1"/>
    <property type="molecule type" value="Genomic_DNA"/>
</dbReference>
<dbReference type="PIR" id="B72343">
    <property type="entry name" value="B72343"/>
</dbReference>
<dbReference type="RefSeq" id="NP_228516.1">
    <property type="nucleotide sequence ID" value="NC_000853.1"/>
</dbReference>
<dbReference type="SMR" id="Q9WZG6"/>
<dbReference type="FunCoup" id="Q9WZG6">
    <property type="interactions" value="338"/>
</dbReference>
<dbReference type="STRING" id="243274.TM_0707"/>
<dbReference type="PaxDb" id="243274-THEMA_01130"/>
<dbReference type="EnsemblBacteria" id="AAD35789">
    <property type="protein sequence ID" value="AAD35789"/>
    <property type="gene ID" value="TM_0707"/>
</dbReference>
<dbReference type="KEGG" id="tma:TM0707"/>
<dbReference type="KEGG" id="tmi:THEMA_01130"/>
<dbReference type="PATRIC" id="fig|243274.18.peg.220"/>
<dbReference type="eggNOG" id="COG0357">
    <property type="taxonomic scope" value="Bacteria"/>
</dbReference>
<dbReference type="InParanoid" id="Q9WZG6"/>
<dbReference type="OrthoDB" id="9808773at2"/>
<dbReference type="Proteomes" id="UP000008183">
    <property type="component" value="Chromosome"/>
</dbReference>
<dbReference type="GO" id="GO:0005829">
    <property type="term" value="C:cytosol"/>
    <property type="evidence" value="ECO:0000318"/>
    <property type="project" value="GO_Central"/>
</dbReference>
<dbReference type="GO" id="GO:0070043">
    <property type="term" value="F:rRNA (guanine-N7-)-methyltransferase activity"/>
    <property type="evidence" value="ECO:0000318"/>
    <property type="project" value="GO_Central"/>
</dbReference>
<dbReference type="CDD" id="cd02440">
    <property type="entry name" value="AdoMet_MTases"/>
    <property type="match status" value="1"/>
</dbReference>
<dbReference type="FunFam" id="3.40.50.150:FF:000585">
    <property type="entry name" value="Ribosomal RNA small subunit methyltransferase G"/>
    <property type="match status" value="1"/>
</dbReference>
<dbReference type="Gene3D" id="3.40.50.150">
    <property type="entry name" value="Vaccinia Virus protein VP39"/>
    <property type="match status" value="1"/>
</dbReference>
<dbReference type="HAMAP" id="MF_00074">
    <property type="entry name" value="16SrRNA_methyltr_G"/>
    <property type="match status" value="1"/>
</dbReference>
<dbReference type="InterPro" id="IPR003682">
    <property type="entry name" value="rRNA_ssu_MeTfrase_G"/>
</dbReference>
<dbReference type="InterPro" id="IPR029063">
    <property type="entry name" value="SAM-dependent_MTases_sf"/>
</dbReference>
<dbReference type="NCBIfam" id="TIGR00138">
    <property type="entry name" value="rsmG_gidB"/>
    <property type="match status" value="1"/>
</dbReference>
<dbReference type="PANTHER" id="PTHR31760">
    <property type="entry name" value="S-ADENOSYL-L-METHIONINE-DEPENDENT METHYLTRANSFERASES SUPERFAMILY PROTEIN"/>
    <property type="match status" value="1"/>
</dbReference>
<dbReference type="PANTHER" id="PTHR31760:SF0">
    <property type="entry name" value="S-ADENOSYL-L-METHIONINE-DEPENDENT METHYLTRANSFERASES SUPERFAMILY PROTEIN"/>
    <property type="match status" value="1"/>
</dbReference>
<dbReference type="Pfam" id="PF02527">
    <property type="entry name" value="GidB"/>
    <property type="match status" value="1"/>
</dbReference>
<dbReference type="PIRSF" id="PIRSF003078">
    <property type="entry name" value="GidB"/>
    <property type="match status" value="1"/>
</dbReference>
<dbReference type="SUPFAM" id="SSF53335">
    <property type="entry name" value="S-adenosyl-L-methionine-dependent methyltransferases"/>
    <property type="match status" value="1"/>
</dbReference>
<keyword id="KW-0963">Cytoplasm</keyword>
<keyword id="KW-0489">Methyltransferase</keyword>
<keyword id="KW-1185">Reference proteome</keyword>
<keyword id="KW-0698">rRNA processing</keyword>
<keyword id="KW-0949">S-adenosyl-L-methionine</keyword>
<keyword id="KW-0808">Transferase</keyword>
<organism>
    <name type="scientific">Thermotoga maritima (strain ATCC 43589 / DSM 3109 / JCM 10099 / NBRC 100826 / MSB8)</name>
    <dbReference type="NCBI Taxonomy" id="243274"/>
    <lineage>
        <taxon>Bacteria</taxon>
        <taxon>Thermotogati</taxon>
        <taxon>Thermotogota</taxon>
        <taxon>Thermotogae</taxon>
        <taxon>Thermotogales</taxon>
        <taxon>Thermotogaceae</taxon>
        <taxon>Thermotoga</taxon>
    </lineage>
</organism>
<sequence>MLEFSSEVSLLDSVKNILLEYGLRFQEPQIEKVDKYIEELLGVPYNLTAHRDLDSAVHKNVVEILLPLKEELKGTLLDVGSGNGVPGLILAIFFSKLKVVLLDSREKSVNFLRGVIEKLDLENVSVVKERAENFSKERREEFDYVTARAVARLNVLVEICTPALKTGGKLLFYKGPSYIEELKEAQRAMKELKVELEKVREYSLKTGERRALLILRKYESSPEKYPRRVGVPFKRPLL</sequence>
<reference key="1">
    <citation type="journal article" date="1999" name="Nature">
        <title>Evidence for lateral gene transfer between Archaea and Bacteria from genome sequence of Thermotoga maritima.</title>
        <authorList>
            <person name="Nelson K.E."/>
            <person name="Clayton R.A."/>
            <person name="Gill S.R."/>
            <person name="Gwinn M.L."/>
            <person name="Dodson R.J."/>
            <person name="Haft D.H."/>
            <person name="Hickey E.K."/>
            <person name="Peterson J.D."/>
            <person name="Nelson W.C."/>
            <person name="Ketchum K.A."/>
            <person name="McDonald L.A."/>
            <person name="Utterback T.R."/>
            <person name="Malek J.A."/>
            <person name="Linher K.D."/>
            <person name="Garrett M.M."/>
            <person name="Stewart A.M."/>
            <person name="Cotton M.D."/>
            <person name="Pratt M.S."/>
            <person name="Phillips C.A."/>
            <person name="Richardson D.L."/>
            <person name="Heidelberg J.F."/>
            <person name="Sutton G.G."/>
            <person name="Fleischmann R.D."/>
            <person name="Eisen J.A."/>
            <person name="White O."/>
            <person name="Salzberg S.L."/>
            <person name="Smith H.O."/>
            <person name="Venter J.C."/>
            <person name="Fraser C.M."/>
        </authorList>
    </citation>
    <scope>NUCLEOTIDE SEQUENCE [LARGE SCALE GENOMIC DNA]</scope>
    <source>
        <strain>ATCC 43589 / DSM 3109 / JCM 10099 / NBRC 100826 / MSB8</strain>
    </source>
</reference>
<proteinExistence type="inferred from homology"/>
<accession>Q9WZG6</accession>
<comment type="function">
    <text evidence="1">Specifically methylates the N7 position of a guanine in 16S rRNA.</text>
</comment>
<comment type="subcellular location">
    <subcellularLocation>
        <location evidence="1">Cytoplasm</location>
    </subcellularLocation>
</comment>
<comment type="similarity">
    <text evidence="1">Belongs to the methyltransferase superfamily. RNA methyltransferase RsmG family.</text>
</comment>
<feature type="chain" id="PRO_0000184356" description="Ribosomal RNA small subunit methyltransferase G">
    <location>
        <begin position="1"/>
        <end position="238"/>
    </location>
</feature>
<feature type="binding site" evidence="1">
    <location>
        <position position="80"/>
    </location>
    <ligand>
        <name>S-adenosyl-L-methionine</name>
        <dbReference type="ChEBI" id="CHEBI:59789"/>
    </ligand>
</feature>
<feature type="binding site" evidence="1">
    <location>
        <begin position="131"/>
        <end position="132"/>
    </location>
    <ligand>
        <name>S-adenosyl-L-methionine</name>
        <dbReference type="ChEBI" id="CHEBI:59789"/>
    </ligand>
</feature>
<feature type="binding site" evidence="1">
    <location>
        <position position="148"/>
    </location>
    <ligand>
        <name>S-adenosyl-L-methionine</name>
        <dbReference type="ChEBI" id="CHEBI:59789"/>
    </ligand>
</feature>
<name>RSMG_THEMA</name>